<gene>
    <name type="primary">HBE4</name>
</gene>
<feature type="chain" id="PRO_0000053183" description="Hemoglobin subunit epsilon-4">
    <location>
        <begin position="1"/>
        <end position="147"/>
    </location>
</feature>
<feature type="domain" description="Globin" evidence="1">
    <location>
        <begin position="3"/>
        <end position="147"/>
    </location>
</feature>
<feature type="binding site" description="distal binding residue" evidence="1">
    <location>
        <position position="64"/>
    </location>
    <ligand>
        <name>heme b</name>
        <dbReference type="ChEBI" id="CHEBI:60344"/>
    </ligand>
    <ligandPart>
        <name>Fe</name>
        <dbReference type="ChEBI" id="CHEBI:18248"/>
    </ligandPart>
</feature>
<feature type="binding site" description="proximal binding residue" evidence="1">
    <location>
        <position position="93"/>
    </location>
    <ligand>
        <name>heme b</name>
        <dbReference type="ChEBI" id="CHEBI:60344"/>
    </ligand>
    <ligandPart>
        <name>Fe</name>
        <dbReference type="ChEBI" id="CHEBI:18248"/>
    </ligandPart>
</feature>
<sequence>MVHFTTEEKAAVASLWAKVNVEVVGGESLARLLIVYPWTQRFFDSFGNLYSESAIMGNPKVKAHGRKVLNSFGNAIEHMDDLKGTFADLSELHCDKLHVDPENFRLLGNMILIVLATHFSKEFTPQMQASWQKLTNAVANALAHKYH</sequence>
<name>HBE4_BOVIN</name>
<accession>P06643</accession>
<evidence type="ECO:0000255" key="1">
    <source>
        <dbReference type="PROSITE-ProRule" id="PRU00238"/>
    </source>
</evidence>
<dbReference type="EMBL" id="X03249">
    <property type="protein sequence ID" value="CAA27008.1"/>
    <property type="molecule type" value="Genomic_DNA"/>
</dbReference>
<dbReference type="PIR" id="B25754">
    <property type="entry name" value="HEBO4"/>
</dbReference>
<dbReference type="RefSeq" id="NP_001014910.1">
    <property type="nucleotide sequence ID" value="NM_001014910.2"/>
</dbReference>
<dbReference type="EMDB" id="EMD-12978"/>
<dbReference type="SMR" id="P06643"/>
<dbReference type="FunCoup" id="P06643">
    <property type="interactions" value="14"/>
</dbReference>
<dbReference type="STRING" id="9913.ENSBTAP00000052791"/>
<dbReference type="PaxDb" id="9913-ENSBTAP00000005452"/>
<dbReference type="GeneID" id="513108"/>
<dbReference type="KEGG" id="bta:513108"/>
<dbReference type="CTD" id="513108"/>
<dbReference type="VEuPathDB" id="HostDB:ENSBTAG00000037751"/>
<dbReference type="eggNOG" id="KOG3378">
    <property type="taxonomic scope" value="Eukaryota"/>
</dbReference>
<dbReference type="HOGENOM" id="CLU_003827_10_0_1"/>
<dbReference type="InParanoid" id="P06643"/>
<dbReference type="OMA" id="ETAIMGN"/>
<dbReference type="OrthoDB" id="9886081at2759"/>
<dbReference type="TreeFam" id="TF333268"/>
<dbReference type="Proteomes" id="UP000009136">
    <property type="component" value="Chromosome 15"/>
</dbReference>
<dbReference type="Bgee" id="ENSBTAG00000037751">
    <property type="expression patterns" value="Expressed in infraspinatus muscle and 12 other cell types or tissues"/>
</dbReference>
<dbReference type="GO" id="GO:0031838">
    <property type="term" value="C:haptoglobin-hemoglobin complex"/>
    <property type="evidence" value="ECO:0000318"/>
    <property type="project" value="GO_Central"/>
</dbReference>
<dbReference type="GO" id="GO:0005833">
    <property type="term" value="C:hemoglobin complex"/>
    <property type="evidence" value="ECO:0000318"/>
    <property type="project" value="GO_Central"/>
</dbReference>
<dbReference type="GO" id="GO:0020037">
    <property type="term" value="F:heme binding"/>
    <property type="evidence" value="ECO:0000318"/>
    <property type="project" value="GO_Central"/>
</dbReference>
<dbReference type="GO" id="GO:0031721">
    <property type="term" value="F:hemoglobin alpha binding"/>
    <property type="evidence" value="ECO:0000318"/>
    <property type="project" value="GO_Central"/>
</dbReference>
<dbReference type="GO" id="GO:0046872">
    <property type="term" value="F:metal ion binding"/>
    <property type="evidence" value="ECO:0007669"/>
    <property type="project" value="UniProtKB-KW"/>
</dbReference>
<dbReference type="GO" id="GO:0019825">
    <property type="term" value="F:oxygen binding"/>
    <property type="evidence" value="ECO:0000318"/>
    <property type="project" value="GO_Central"/>
</dbReference>
<dbReference type="GO" id="GO:0005344">
    <property type="term" value="F:oxygen carrier activity"/>
    <property type="evidence" value="ECO:0000318"/>
    <property type="project" value="GO_Central"/>
</dbReference>
<dbReference type="GO" id="GO:0098869">
    <property type="term" value="P:cellular oxidant detoxification"/>
    <property type="evidence" value="ECO:0007669"/>
    <property type="project" value="GOC"/>
</dbReference>
<dbReference type="GO" id="GO:0042744">
    <property type="term" value="P:hydrogen peroxide catabolic process"/>
    <property type="evidence" value="ECO:0000318"/>
    <property type="project" value="GO_Central"/>
</dbReference>
<dbReference type="CDD" id="cd08925">
    <property type="entry name" value="Hb-beta-like"/>
    <property type="match status" value="1"/>
</dbReference>
<dbReference type="FunFam" id="1.10.490.10:FF:000001">
    <property type="entry name" value="Hemoglobin subunit beta"/>
    <property type="match status" value="1"/>
</dbReference>
<dbReference type="Gene3D" id="1.10.490.10">
    <property type="entry name" value="Globins"/>
    <property type="match status" value="1"/>
</dbReference>
<dbReference type="InterPro" id="IPR000971">
    <property type="entry name" value="Globin"/>
</dbReference>
<dbReference type="InterPro" id="IPR009050">
    <property type="entry name" value="Globin-like_sf"/>
</dbReference>
<dbReference type="InterPro" id="IPR012292">
    <property type="entry name" value="Globin/Proto"/>
</dbReference>
<dbReference type="InterPro" id="IPR002337">
    <property type="entry name" value="Hemoglobin_b"/>
</dbReference>
<dbReference type="InterPro" id="IPR050056">
    <property type="entry name" value="Hemoglobin_oxygen_transport"/>
</dbReference>
<dbReference type="PANTHER" id="PTHR11442">
    <property type="entry name" value="HEMOGLOBIN FAMILY MEMBER"/>
    <property type="match status" value="1"/>
</dbReference>
<dbReference type="PANTHER" id="PTHR11442:SF35">
    <property type="entry name" value="HEMOGLOBIN SUBUNIT EPSILON-2"/>
    <property type="match status" value="1"/>
</dbReference>
<dbReference type="Pfam" id="PF00042">
    <property type="entry name" value="Globin"/>
    <property type="match status" value="1"/>
</dbReference>
<dbReference type="PRINTS" id="PR00814">
    <property type="entry name" value="BETAHAEM"/>
</dbReference>
<dbReference type="SUPFAM" id="SSF46458">
    <property type="entry name" value="Globin-like"/>
    <property type="match status" value="1"/>
</dbReference>
<dbReference type="PROSITE" id="PS01033">
    <property type="entry name" value="GLOBIN"/>
    <property type="match status" value="1"/>
</dbReference>
<protein>
    <recommendedName>
        <fullName>Hemoglobin subunit epsilon-4</fullName>
    </recommendedName>
    <alternativeName>
        <fullName>Epsilon-4-globin</fullName>
    </alternativeName>
    <alternativeName>
        <fullName>Hemoglobin epsilon-4 chain</fullName>
    </alternativeName>
</protein>
<proteinExistence type="evidence at transcript level"/>
<organism>
    <name type="scientific">Bos taurus</name>
    <name type="common">Bovine</name>
    <dbReference type="NCBI Taxonomy" id="9913"/>
    <lineage>
        <taxon>Eukaryota</taxon>
        <taxon>Metazoa</taxon>
        <taxon>Chordata</taxon>
        <taxon>Craniata</taxon>
        <taxon>Vertebrata</taxon>
        <taxon>Euteleostomi</taxon>
        <taxon>Mammalia</taxon>
        <taxon>Eutheria</taxon>
        <taxon>Laurasiatheria</taxon>
        <taxon>Artiodactyla</taxon>
        <taxon>Ruminantia</taxon>
        <taxon>Pecora</taxon>
        <taxon>Bovidae</taxon>
        <taxon>Bovinae</taxon>
        <taxon>Bos</taxon>
    </lineage>
</organism>
<reference key="1">
    <citation type="journal article" date="1985" name="Mol. Biol. Evol.">
        <title>Concerted evolution of the cow epsilon 2 and epsilon 4 beta-globin genes.</title>
        <authorList>
            <person name="Schimenti J.C."/>
            <person name="Duncan C.H."/>
        </authorList>
    </citation>
    <scope>NUCLEOTIDE SEQUENCE [GENOMIC DNA]</scope>
</reference>
<keyword id="KW-0349">Heme</keyword>
<keyword id="KW-0408">Iron</keyword>
<keyword id="KW-0479">Metal-binding</keyword>
<keyword id="KW-0561">Oxygen transport</keyword>
<keyword id="KW-1185">Reference proteome</keyword>
<keyword id="KW-0813">Transport</keyword>
<comment type="function">
    <text>Hemoglobin epsilon chain is a beta-type chain found in early embryos.</text>
</comment>
<comment type="tissue specificity">
    <text>Red blood cells.</text>
</comment>
<comment type="similarity">
    <text evidence="1">Belongs to the globin family.</text>
</comment>